<dbReference type="EC" id="3.4.24.77"/>
<dbReference type="EMBL" id="M81703">
    <property type="protein sequence ID" value="AAA26740.1"/>
    <property type="molecule type" value="Genomic_DNA"/>
</dbReference>
<dbReference type="EMBL" id="M89476">
    <property type="protein sequence ID" value="AAA26805.1"/>
    <property type="molecule type" value="Genomic_DNA"/>
</dbReference>
<dbReference type="EMBL" id="D00670">
    <property type="protein sequence ID" value="BAA00573.1"/>
    <property type="molecule type" value="Genomic_DNA"/>
</dbReference>
<dbReference type="PIR" id="JH0571">
    <property type="entry name" value="JH0571"/>
</dbReference>
<dbReference type="SMR" id="P0A3Z8"/>
<dbReference type="MEROPS" id="M07.001"/>
<dbReference type="GO" id="GO:0005576">
    <property type="term" value="C:extracellular region"/>
    <property type="evidence" value="ECO:0007669"/>
    <property type="project" value="UniProtKB-SubCell"/>
</dbReference>
<dbReference type="GO" id="GO:0004222">
    <property type="term" value="F:metalloendopeptidase activity"/>
    <property type="evidence" value="ECO:0007669"/>
    <property type="project" value="InterPro"/>
</dbReference>
<dbReference type="GO" id="GO:0008270">
    <property type="term" value="F:zinc ion binding"/>
    <property type="evidence" value="ECO:0007669"/>
    <property type="project" value="InterPro"/>
</dbReference>
<dbReference type="GO" id="GO:0006508">
    <property type="term" value="P:proteolysis"/>
    <property type="evidence" value="ECO:0007669"/>
    <property type="project" value="UniProtKB-KW"/>
</dbReference>
<dbReference type="Gene3D" id="3.40.390.10">
    <property type="entry name" value="Collagenase (Catalytic Domain)"/>
    <property type="match status" value="1"/>
</dbReference>
<dbReference type="InterPro" id="IPR024079">
    <property type="entry name" value="MetalloPept_cat_dom_sf"/>
</dbReference>
<dbReference type="InterPro" id="IPR000013">
    <property type="entry name" value="Peptidase_M7"/>
</dbReference>
<dbReference type="NCBIfam" id="NF033628">
    <property type="entry name" value="snapalysin"/>
    <property type="match status" value="1"/>
</dbReference>
<dbReference type="Pfam" id="PF02031">
    <property type="entry name" value="Peptidase_M7"/>
    <property type="match status" value="1"/>
</dbReference>
<dbReference type="PIRSF" id="PIRSF016573">
    <property type="entry name" value="Peptidase_M7"/>
    <property type="match status" value="1"/>
</dbReference>
<dbReference type="PRINTS" id="PR00787">
    <property type="entry name" value="NEUTRALPTASE"/>
</dbReference>
<dbReference type="SUPFAM" id="SSF55486">
    <property type="entry name" value="Metalloproteases ('zincins'), catalytic domain"/>
    <property type="match status" value="1"/>
</dbReference>
<feature type="signal peptide" evidence="3">
    <location>
        <begin position="1"/>
        <end position="29"/>
    </location>
</feature>
<feature type="propeptide" id="PRO_0000028648" evidence="3">
    <location>
        <begin position="30"/>
        <end position="42"/>
    </location>
</feature>
<feature type="chain" id="PRO_0000028649" description="Extracellular small neutral protease">
    <location>
        <begin position="43"/>
        <end position="227"/>
    </location>
</feature>
<feature type="active site" evidence="1">
    <location>
        <position position="164"/>
    </location>
</feature>
<feature type="binding site" evidence="2">
    <location>
        <position position="156"/>
    </location>
    <ligand>
        <name>Ca(2+)</name>
        <dbReference type="ChEBI" id="CHEBI:29108"/>
    </ligand>
</feature>
<feature type="binding site" evidence="2">
    <location>
        <position position="158"/>
    </location>
    <ligand>
        <name>Ca(2+)</name>
        <dbReference type="ChEBI" id="CHEBI:29108"/>
    </ligand>
</feature>
<feature type="binding site" evidence="2">
    <location>
        <position position="163"/>
    </location>
    <ligand>
        <name>Zn(2+)</name>
        <dbReference type="ChEBI" id="CHEBI:29105"/>
        <note>catalytic</note>
    </ligand>
</feature>
<feature type="binding site" evidence="2">
    <location>
        <position position="167"/>
    </location>
    <ligand>
        <name>Zn(2+)</name>
        <dbReference type="ChEBI" id="CHEBI:29105"/>
        <note>catalytic</note>
    </ligand>
</feature>
<feature type="binding site" evidence="2">
    <location>
        <position position="173"/>
    </location>
    <ligand>
        <name>Zn(2+)</name>
        <dbReference type="ChEBI" id="CHEBI:29105"/>
        <note>catalytic</note>
    </ligand>
</feature>
<feature type="disulfide bond" evidence="2">
    <location>
        <begin position="179"/>
        <end position="192"/>
    </location>
</feature>
<feature type="sequence conflict" description="In Ref. 3; BAA00573." evidence="4" ref="3">
    <original>A</original>
    <variation>R</variation>
    <location>
        <position position="210"/>
    </location>
</feature>
<protein>
    <recommendedName>
        <fullName>Extracellular small neutral protease</fullName>
        <ecNumber>3.4.24.77</ecNumber>
    </recommendedName>
    <alternativeName>
        <fullName>Extracellular metalloprotease</fullName>
    </alternativeName>
    <alternativeName>
        <fullName>Snapalysin</fullName>
    </alternativeName>
</protein>
<keyword id="KW-0106">Calcium</keyword>
<keyword id="KW-0903">Direct protein sequencing</keyword>
<keyword id="KW-1015">Disulfide bond</keyword>
<keyword id="KW-0378">Hydrolase</keyword>
<keyword id="KW-0479">Metal-binding</keyword>
<keyword id="KW-0482">Metalloprotease</keyword>
<keyword id="KW-0645">Protease</keyword>
<keyword id="KW-0964">Secreted</keyword>
<keyword id="KW-0732">Signal</keyword>
<keyword id="KW-0862">Zinc</keyword>
<keyword id="KW-0865">Zymogen</keyword>
<organism>
    <name type="scientific">Streptomyces lividans</name>
    <dbReference type="NCBI Taxonomy" id="1916"/>
    <lineage>
        <taxon>Bacteria</taxon>
        <taxon>Bacillati</taxon>
        <taxon>Actinomycetota</taxon>
        <taxon>Actinomycetes</taxon>
        <taxon>Kitasatosporales</taxon>
        <taxon>Streptomycetaceae</taxon>
        <taxon>Streptomyces</taxon>
    </lineage>
</organism>
<name>SNPA2_STRLI</name>
<sequence length="227" mass="23765">MRITLPLLSTAVGLGLTAAVLGTGPAATAAAPQEPVRAAQLGYQPSAGSGEDAAANRAFFEAVVKSVAEKRAANPSAAAAVTVYYSATNAPSFRSQISRSAQIWNSSVSNVRLAESSSGADFAYYEGNDSRGSYASTDGHGSGYIFLDYRQNQQYDSTRVTAHETGHVLGLPDHYSGPCSELMSGGGPGPSCTNPYPNSTERSRVNQLWAYGFQAALDKALEKASQR</sequence>
<evidence type="ECO:0000250" key="1"/>
<evidence type="ECO:0000250" key="2">
    <source>
        <dbReference type="UniProtKB" id="P56406"/>
    </source>
</evidence>
<evidence type="ECO:0000255" key="3"/>
<evidence type="ECO:0000305" key="4"/>
<accession>P0A3Z8</accession>
<accession>P43162</accession>
<gene>
    <name type="primary">snpA</name>
    <name type="synonym">lmp</name>
    <name type="synonym">mprA</name>
    <name type="synonym">mprA2</name>
    <name type="synonym">prt</name>
</gene>
<proteinExistence type="evidence at protein level"/>
<comment type="catalytic activity">
    <reaction>
        <text>Hydrolyzes proteins with a preference for Tyr or Phe in the P1' position. Has no action on amino-acid p-nitroanilides.</text>
        <dbReference type="EC" id="3.4.24.77"/>
    </reaction>
</comment>
<comment type="cofactor">
    <cofactor evidence="1">
        <name>Ca(2+)</name>
        <dbReference type="ChEBI" id="CHEBI:29108"/>
    </cofactor>
    <text evidence="1">Binds 1 Ca(2+) ion per subunit.</text>
</comment>
<comment type="cofactor">
    <cofactor evidence="1">
        <name>Zn(2+)</name>
        <dbReference type="ChEBI" id="CHEBI:29105"/>
    </cofactor>
    <text evidence="1">Binds 1 zinc ion per subunit.</text>
</comment>
<comment type="subcellular location">
    <subcellularLocation>
        <location>Secreted</location>
    </subcellularLocation>
</comment>
<comment type="PTM">
    <text>The N-terminus is blocked.</text>
</comment>
<comment type="similarity">
    <text evidence="4">Belongs to the peptidase M7 family.</text>
</comment>
<reference key="1">
    <citation type="journal article" date="1992" name="Can. J. Microbiol.">
        <title>Cloning of genetic loci involved in endoprotease activity in Streptomyces lividans 66: a novel neutral protease gene with an adjacent divergent putative regulatory gene.</title>
        <authorList>
            <person name="Butler M.J."/>
            <person name="Davey C.C."/>
            <person name="Krygsman P."/>
            <person name="Walczyk E."/>
            <person name="Malek L.T."/>
        </authorList>
    </citation>
    <scope>NUCLEOTIDE SEQUENCE [GENOMIC DNA]</scope>
    <source>
        <strain>66 / 1326</strain>
    </source>
</reference>
<reference key="2">
    <citation type="journal article" date="1992" name="Gene">
        <title>Cloning and characterization of a gene encoding extracellular metalloprotease from Streptomyces lividans.</title>
        <authorList>
            <person name="Lichenstein H.S."/>
            <person name="Busse L.A."/>
            <person name="Smith G.A."/>
            <person name="Narhi L.O."/>
            <person name="McGinley M.O."/>
            <person name="Rohde M.F."/>
            <person name="Katzowitz J.L."/>
            <person name="Zukowski M.M."/>
        </authorList>
    </citation>
    <scope>NUCLEOTIDE SEQUENCE [GENOMIC DNA]</scope>
    <scope>PROTEIN SEQUENCE OF 113-131</scope>
    <source>
        <strain>TK24</strain>
    </source>
</reference>
<reference key="3">
    <citation type="submission" date="1992-09" db="EMBL/GenBank/DDBJ databases">
        <authorList>
            <person name="Takahashi H."/>
        </authorList>
    </citation>
    <scope>NUCLEOTIDE SEQUENCE [GENOMIC DNA]</scope>
</reference>